<comment type="function">
    <text evidence="1">Catalyzes the reversible transfer of the terminal phosphate group between ATP and AMP. Plays an important role in cellular energy homeostasis and in adenine nucleotide metabolism.</text>
</comment>
<comment type="catalytic activity">
    <reaction evidence="1">
        <text>AMP + ATP = 2 ADP</text>
        <dbReference type="Rhea" id="RHEA:12973"/>
        <dbReference type="ChEBI" id="CHEBI:30616"/>
        <dbReference type="ChEBI" id="CHEBI:456215"/>
        <dbReference type="ChEBI" id="CHEBI:456216"/>
        <dbReference type="EC" id="2.7.4.3"/>
    </reaction>
</comment>
<comment type="pathway">
    <text evidence="1">Purine metabolism; AMP biosynthesis via salvage pathway; AMP from ADP: step 1/1.</text>
</comment>
<comment type="subunit">
    <text evidence="1">Monomer.</text>
</comment>
<comment type="subcellular location">
    <subcellularLocation>
        <location evidence="1">Cytoplasm</location>
    </subcellularLocation>
</comment>
<comment type="domain">
    <text evidence="1">Consists of three domains, a large central CORE domain and two small peripheral domains, NMPbind and LID, which undergo movements during catalysis. The LID domain closes over the site of phosphoryl transfer upon ATP binding. Assembling and dissambling the active center during each catalytic cycle provides an effective means to prevent ATP hydrolysis.</text>
</comment>
<comment type="similarity">
    <text evidence="1">Belongs to the adenylate kinase family.</text>
</comment>
<evidence type="ECO:0000255" key="1">
    <source>
        <dbReference type="HAMAP-Rule" id="MF_00235"/>
    </source>
</evidence>
<feature type="chain" id="PRO_1000100608" description="Adenylate kinase">
    <location>
        <begin position="1"/>
        <end position="214"/>
    </location>
</feature>
<feature type="region of interest" description="NMP" evidence="1">
    <location>
        <begin position="30"/>
        <end position="59"/>
    </location>
</feature>
<feature type="region of interest" description="LID" evidence="1">
    <location>
        <begin position="122"/>
        <end position="159"/>
    </location>
</feature>
<feature type="binding site" evidence="1">
    <location>
        <begin position="10"/>
        <end position="15"/>
    </location>
    <ligand>
        <name>ATP</name>
        <dbReference type="ChEBI" id="CHEBI:30616"/>
    </ligand>
</feature>
<feature type="binding site" evidence="1">
    <location>
        <position position="31"/>
    </location>
    <ligand>
        <name>AMP</name>
        <dbReference type="ChEBI" id="CHEBI:456215"/>
    </ligand>
</feature>
<feature type="binding site" evidence="1">
    <location>
        <position position="36"/>
    </location>
    <ligand>
        <name>AMP</name>
        <dbReference type="ChEBI" id="CHEBI:456215"/>
    </ligand>
</feature>
<feature type="binding site" evidence="1">
    <location>
        <begin position="57"/>
        <end position="59"/>
    </location>
    <ligand>
        <name>AMP</name>
        <dbReference type="ChEBI" id="CHEBI:456215"/>
    </ligand>
</feature>
<feature type="binding site" evidence="1">
    <location>
        <begin position="85"/>
        <end position="88"/>
    </location>
    <ligand>
        <name>AMP</name>
        <dbReference type="ChEBI" id="CHEBI:456215"/>
    </ligand>
</feature>
<feature type="binding site" evidence="1">
    <location>
        <position position="92"/>
    </location>
    <ligand>
        <name>AMP</name>
        <dbReference type="ChEBI" id="CHEBI:456215"/>
    </ligand>
</feature>
<feature type="binding site" evidence="1">
    <location>
        <position position="123"/>
    </location>
    <ligand>
        <name>ATP</name>
        <dbReference type="ChEBI" id="CHEBI:30616"/>
    </ligand>
</feature>
<feature type="binding site" evidence="1">
    <location>
        <begin position="132"/>
        <end position="133"/>
    </location>
    <ligand>
        <name>ATP</name>
        <dbReference type="ChEBI" id="CHEBI:30616"/>
    </ligand>
</feature>
<feature type="binding site" evidence="1">
    <location>
        <position position="156"/>
    </location>
    <ligand>
        <name>AMP</name>
        <dbReference type="ChEBI" id="CHEBI:456215"/>
    </ligand>
</feature>
<feature type="binding site" evidence="1">
    <location>
        <position position="167"/>
    </location>
    <ligand>
        <name>AMP</name>
        <dbReference type="ChEBI" id="CHEBI:456215"/>
    </ligand>
</feature>
<feature type="binding site" evidence="1">
    <location>
        <position position="200"/>
    </location>
    <ligand>
        <name>ATP</name>
        <dbReference type="ChEBI" id="CHEBI:30616"/>
    </ligand>
</feature>
<proteinExistence type="inferred from homology"/>
<keyword id="KW-0067">ATP-binding</keyword>
<keyword id="KW-0963">Cytoplasm</keyword>
<keyword id="KW-0418">Kinase</keyword>
<keyword id="KW-0545">Nucleotide biosynthesis</keyword>
<keyword id="KW-0547">Nucleotide-binding</keyword>
<keyword id="KW-1185">Reference proteome</keyword>
<keyword id="KW-0808">Transferase</keyword>
<name>KAD_SHEWM</name>
<accession>B1KNK5</accession>
<organism>
    <name type="scientific">Shewanella woodyi (strain ATCC 51908 / MS32)</name>
    <dbReference type="NCBI Taxonomy" id="392500"/>
    <lineage>
        <taxon>Bacteria</taxon>
        <taxon>Pseudomonadati</taxon>
        <taxon>Pseudomonadota</taxon>
        <taxon>Gammaproteobacteria</taxon>
        <taxon>Alteromonadales</taxon>
        <taxon>Shewanellaceae</taxon>
        <taxon>Shewanella</taxon>
    </lineage>
</organism>
<protein>
    <recommendedName>
        <fullName evidence="1">Adenylate kinase</fullName>
        <shortName evidence="1">AK</shortName>
        <ecNumber evidence="1">2.7.4.3</ecNumber>
    </recommendedName>
    <alternativeName>
        <fullName evidence="1">ATP-AMP transphosphorylase</fullName>
    </alternativeName>
    <alternativeName>
        <fullName evidence="1">ATP:AMP phosphotransferase</fullName>
    </alternativeName>
    <alternativeName>
        <fullName evidence="1">Adenylate monophosphate kinase</fullName>
    </alternativeName>
</protein>
<reference key="1">
    <citation type="submission" date="2008-02" db="EMBL/GenBank/DDBJ databases">
        <title>Complete sequence of Shewanella woodyi ATCC 51908.</title>
        <authorList>
            <consortium name="US DOE Joint Genome Institute"/>
            <person name="Copeland A."/>
            <person name="Lucas S."/>
            <person name="Lapidus A."/>
            <person name="Glavina del Rio T."/>
            <person name="Dalin E."/>
            <person name="Tice H."/>
            <person name="Bruce D."/>
            <person name="Goodwin L."/>
            <person name="Pitluck S."/>
            <person name="Sims D."/>
            <person name="Brettin T."/>
            <person name="Detter J.C."/>
            <person name="Han C."/>
            <person name="Kuske C.R."/>
            <person name="Schmutz J."/>
            <person name="Larimer F."/>
            <person name="Land M."/>
            <person name="Hauser L."/>
            <person name="Kyrpides N."/>
            <person name="Lykidis A."/>
            <person name="Zhao J.-S."/>
            <person name="Richardson P."/>
        </authorList>
    </citation>
    <scope>NUCLEOTIDE SEQUENCE [LARGE SCALE GENOMIC DNA]</scope>
    <source>
        <strain>ATCC 51908 / MS32</strain>
    </source>
</reference>
<sequence length="214" mass="23196">MRIMLLGAPGAGKGTQAQFIMEKYGIPQISTGDMLRAAVKAGTPLGLEAKKVMDAGQLVSDELIIGLVKERVAQADCEKGFLLDGFPRTIPQADAMADAGIAIDHVVEIDVPDEEIVKRMSGRRVHPGSGRVYHIVFNQPKVEGKDDVTGEDLAIRPDDEESTVRKRLDIYHEQTKPLVEYYGNVAANGQTKYSKFDGTQSVASVSEEIVVALS</sequence>
<dbReference type="EC" id="2.7.4.3" evidence="1"/>
<dbReference type="EMBL" id="CP000961">
    <property type="protein sequence ID" value="ACA86082.1"/>
    <property type="molecule type" value="Genomic_DNA"/>
</dbReference>
<dbReference type="RefSeq" id="WP_012324428.1">
    <property type="nucleotide sequence ID" value="NC_010506.1"/>
</dbReference>
<dbReference type="SMR" id="B1KNK5"/>
<dbReference type="STRING" id="392500.Swoo_1798"/>
<dbReference type="KEGG" id="swd:Swoo_1798"/>
<dbReference type="eggNOG" id="COG0563">
    <property type="taxonomic scope" value="Bacteria"/>
</dbReference>
<dbReference type="HOGENOM" id="CLU_032354_1_2_6"/>
<dbReference type="UniPathway" id="UPA00588">
    <property type="reaction ID" value="UER00649"/>
</dbReference>
<dbReference type="Proteomes" id="UP000002168">
    <property type="component" value="Chromosome"/>
</dbReference>
<dbReference type="GO" id="GO:0005737">
    <property type="term" value="C:cytoplasm"/>
    <property type="evidence" value="ECO:0007669"/>
    <property type="project" value="UniProtKB-SubCell"/>
</dbReference>
<dbReference type="GO" id="GO:0004017">
    <property type="term" value="F:adenylate kinase activity"/>
    <property type="evidence" value="ECO:0007669"/>
    <property type="project" value="UniProtKB-UniRule"/>
</dbReference>
<dbReference type="GO" id="GO:0005524">
    <property type="term" value="F:ATP binding"/>
    <property type="evidence" value="ECO:0007669"/>
    <property type="project" value="UniProtKB-UniRule"/>
</dbReference>
<dbReference type="GO" id="GO:0044209">
    <property type="term" value="P:AMP salvage"/>
    <property type="evidence" value="ECO:0007669"/>
    <property type="project" value="UniProtKB-UniRule"/>
</dbReference>
<dbReference type="CDD" id="cd01428">
    <property type="entry name" value="ADK"/>
    <property type="match status" value="1"/>
</dbReference>
<dbReference type="FunFam" id="3.40.50.300:FF:000106">
    <property type="entry name" value="Adenylate kinase mitochondrial"/>
    <property type="match status" value="1"/>
</dbReference>
<dbReference type="Gene3D" id="3.40.50.300">
    <property type="entry name" value="P-loop containing nucleotide triphosphate hydrolases"/>
    <property type="match status" value="1"/>
</dbReference>
<dbReference type="HAMAP" id="MF_00235">
    <property type="entry name" value="Adenylate_kinase_Adk"/>
    <property type="match status" value="1"/>
</dbReference>
<dbReference type="InterPro" id="IPR006259">
    <property type="entry name" value="Adenyl_kin_sub"/>
</dbReference>
<dbReference type="InterPro" id="IPR000850">
    <property type="entry name" value="Adenylat/UMP-CMP_kin"/>
</dbReference>
<dbReference type="InterPro" id="IPR033690">
    <property type="entry name" value="Adenylat_kinase_CS"/>
</dbReference>
<dbReference type="InterPro" id="IPR007862">
    <property type="entry name" value="Adenylate_kinase_lid-dom"/>
</dbReference>
<dbReference type="InterPro" id="IPR027417">
    <property type="entry name" value="P-loop_NTPase"/>
</dbReference>
<dbReference type="NCBIfam" id="TIGR01351">
    <property type="entry name" value="adk"/>
    <property type="match status" value="1"/>
</dbReference>
<dbReference type="NCBIfam" id="NF001379">
    <property type="entry name" value="PRK00279.1-1"/>
    <property type="match status" value="1"/>
</dbReference>
<dbReference type="NCBIfam" id="NF001380">
    <property type="entry name" value="PRK00279.1-2"/>
    <property type="match status" value="1"/>
</dbReference>
<dbReference type="NCBIfam" id="NF001381">
    <property type="entry name" value="PRK00279.1-3"/>
    <property type="match status" value="1"/>
</dbReference>
<dbReference type="NCBIfam" id="NF011100">
    <property type="entry name" value="PRK14527.1"/>
    <property type="match status" value="1"/>
</dbReference>
<dbReference type="PANTHER" id="PTHR23359">
    <property type="entry name" value="NUCLEOTIDE KINASE"/>
    <property type="match status" value="1"/>
</dbReference>
<dbReference type="Pfam" id="PF00406">
    <property type="entry name" value="ADK"/>
    <property type="match status" value="1"/>
</dbReference>
<dbReference type="Pfam" id="PF05191">
    <property type="entry name" value="ADK_lid"/>
    <property type="match status" value="1"/>
</dbReference>
<dbReference type="PRINTS" id="PR00094">
    <property type="entry name" value="ADENYLTKNASE"/>
</dbReference>
<dbReference type="SUPFAM" id="SSF52540">
    <property type="entry name" value="P-loop containing nucleoside triphosphate hydrolases"/>
    <property type="match status" value="1"/>
</dbReference>
<dbReference type="PROSITE" id="PS00113">
    <property type="entry name" value="ADENYLATE_KINASE"/>
    <property type="match status" value="1"/>
</dbReference>
<gene>
    <name evidence="1" type="primary">adk</name>
    <name type="ordered locus">Swoo_1798</name>
</gene>